<sequence length="719" mass="79018">MQYSIEINKNTEIFNIDKVAKQAAGAVLMRQGKSVVLATVAREEKQVEEDFLPLTVQYIEKAYAAGKIPGGYVKRETKPSDAETLTARIIDRSLRPLFPKGYAYPTQIVVMVLSADPKVDLQVMSLNAASVALYLSDIPMKAPVCGVRIGKIDGNFILNPNNEELQNSTLDLYVAGVKDELLMIEMRALPDQKENEIFIEAPYADVLTQTTSQNMNELSEDEILEALNLAQKAILNGSNAYEEAFSKHKKNSQIELKNEIEYPEILAFIENNFQKQIKEAINQMAKSERASELNKIAKEISNLEIAKEWSEESVLNTLAKVKRKLIRGQILNEGKRADGRSLNEVRPISIETNILPNAHGSCLFTRGQTQALVVATLGGENDAQMIDLLTEKNPISERFMVNYNFPGFSVGEASPIKAPGRRELGHGNLAKRALYPSVDENYPYVIRLVSEILESNGSSSMATVCGGSLALKAAGVPSLKLVAGVAMGLIFEDNKYAVLTDIMGLEDHDGDMDFKVAGSKDGVTALQMDIKLGGIDQETLKQALYQAKEGRIHILNIMEEAAKEIIVNEEVLPKLELFSVDPSKIVDIIGQAGKTIKEIVEKFGVSIDLDREKGEVKIAGSQNEQIKAAKDYIINITSSQKGTKKGSKDKDISGFELGQEFQGIVKKIAPFGAFVELKNGVDGLLHSSKSKHLNLSENQSLKVKISEIKNGKISVDLCE</sequence>
<protein>
    <recommendedName>
        <fullName evidence="1">Polyribonucleotide nucleotidyltransferase</fullName>
        <ecNumber evidence="1">2.7.7.8</ecNumber>
    </recommendedName>
    <alternativeName>
        <fullName evidence="1">Polynucleotide phosphorylase</fullName>
        <shortName evidence="1">PNPase</shortName>
    </alternativeName>
</protein>
<feature type="chain" id="PRO_0000329572" description="Polyribonucleotide nucleotidyltransferase">
    <location>
        <begin position="1"/>
        <end position="719"/>
    </location>
</feature>
<feature type="domain" description="KH" evidence="1">
    <location>
        <begin position="573"/>
        <end position="633"/>
    </location>
</feature>
<feature type="domain" description="S1 motif" evidence="1">
    <location>
        <begin position="658"/>
        <end position="719"/>
    </location>
</feature>
<feature type="binding site" evidence="1">
    <location>
        <position position="507"/>
    </location>
    <ligand>
        <name>Mg(2+)</name>
        <dbReference type="ChEBI" id="CHEBI:18420"/>
    </ligand>
</feature>
<feature type="binding site" evidence="1">
    <location>
        <position position="513"/>
    </location>
    <ligand>
        <name>Mg(2+)</name>
        <dbReference type="ChEBI" id="CHEBI:18420"/>
    </ligand>
</feature>
<comment type="function">
    <text evidence="1">Involved in mRNA degradation. Catalyzes the phosphorolysis of single-stranded polyribonucleotides processively in the 3'- to 5'-direction.</text>
</comment>
<comment type="catalytic activity">
    <reaction evidence="1">
        <text>RNA(n+1) + phosphate = RNA(n) + a ribonucleoside 5'-diphosphate</text>
        <dbReference type="Rhea" id="RHEA:22096"/>
        <dbReference type="Rhea" id="RHEA-COMP:14527"/>
        <dbReference type="Rhea" id="RHEA-COMP:17342"/>
        <dbReference type="ChEBI" id="CHEBI:43474"/>
        <dbReference type="ChEBI" id="CHEBI:57930"/>
        <dbReference type="ChEBI" id="CHEBI:140395"/>
        <dbReference type="EC" id="2.7.7.8"/>
    </reaction>
</comment>
<comment type="cofactor">
    <cofactor evidence="1">
        <name>Mg(2+)</name>
        <dbReference type="ChEBI" id="CHEBI:18420"/>
    </cofactor>
</comment>
<comment type="subcellular location">
    <subcellularLocation>
        <location evidence="1">Cytoplasm</location>
    </subcellularLocation>
</comment>
<comment type="similarity">
    <text evidence="1">Belongs to the polyribonucleotide nucleotidyltransferase family.</text>
</comment>
<evidence type="ECO:0000255" key="1">
    <source>
        <dbReference type="HAMAP-Rule" id="MF_01595"/>
    </source>
</evidence>
<organism>
    <name type="scientific">Campylobacter jejuni (strain RM1221)</name>
    <dbReference type="NCBI Taxonomy" id="195099"/>
    <lineage>
        <taxon>Bacteria</taxon>
        <taxon>Pseudomonadati</taxon>
        <taxon>Campylobacterota</taxon>
        <taxon>Epsilonproteobacteria</taxon>
        <taxon>Campylobacterales</taxon>
        <taxon>Campylobacteraceae</taxon>
        <taxon>Campylobacter</taxon>
    </lineage>
</organism>
<dbReference type="EC" id="2.7.7.8" evidence="1"/>
<dbReference type="EMBL" id="CP000025">
    <property type="protein sequence ID" value="AAW35710.1"/>
    <property type="molecule type" value="Genomic_DNA"/>
</dbReference>
<dbReference type="RefSeq" id="WP_002908583.1">
    <property type="nucleotide sequence ID" value="NC_003912.7"/>
</dbReference>
<dbReference type="SMR" id="Q5HTK8"/>
<dbReference type="KEGG" id="cjr:CJE1390"/>
<dbReference type="HOGENOM" id="CLU_004217_2_2_7"/>
<dbReference type="GO" id="GO:0005829">
    <property type="term" value="C:cytosol"/>
    <property type="evidence" value="ECO:0007669"/>
    <property type="project" value="TreeGrafter"/>
</dbReference>
<dbReference type="GO" id="GO:0000175">
    <property type="term" value="F:3'-5'-RNA exonuclease activity"/>
    <property type="evidence" value="ECO:0007669"/>
    <property type="project" value="TreeGrafter"/>
</dbReference>
<dbReference type="GO" id="GO:0000287">
    <property type="term" value="F:magnesium ion binding"/>
    <property type="evidence" value="ECO:0007669"/>
    <property type="project" value="UniProtKB-UniRule"/>
</dbReference>
<dbReference type="GO" id="GO:0004654">
    <property type="term" value="F:polyribonucleotide nucleotidyltransferase activity"/>
    <property type="evidence" value="ECO:0007669"/>
    <property type="project" value="UniProtKB-UniRule"/>
</dbReference>
<dbReference type="GO" id="GO:0003723">
    <property type="term" value="F:RNA binding"/>
    <property type="evidence" value="ECO:0007669"/>
    <property type="project" value="UniProtKB-UniRule"/>
</dbReference>
<dbReference type="GO" id="GO:0006402">
    <property type="term" value="P:mRNA catabolic process"/>
    <property type="evidence" value="ECO:0007669"/>
    <property type="project" value="UniProtKB-UniRule"/>
</dbReference>
<dbReference type="GO" id="GO:0006396">
    <property type="term" value="P:RNA processing"/>
    <property type="evidence" value="ECO:0007669"/>
    <property type="project" value="InterPro"/>
</dbReference>
<dbReference type="CDD" id="cd02393">
    <property type="entry name" value="KH-I_PNPase"/>
    <property type="match status" value="1"/>
</dbReference>
<dbReference type="CDD" id="cd11364">
    <property type="entry name" value="RNase_PH_PNPase_2"/>
    <property type="match status" value="1"/>
</dbReference>
<dbReference type="FunFam" id="3.30.1370.10:FF:000001">
    <property type="entry name" value="Polyribonucleotide nucleotidyltransferase"/>
    <property type="match status" value="1"/>
</dbReference>
<dbReference type="FunFam" id="3.30.230.70:FF:000026">
    <property type="entry name" value="Polyribonucleotide nucleotidyltransferase"/>
    <property type="match status" value="1"/>
</dbReference>
<dbReference type="FunFam" id="3.30.230.70:FF:000029">
    <property type="entry name" value="Polyribonucleotide nucleotidyltransferase"/>
    <property type="match status" value="1"/>
</dbReference>
<dbReference type="Gene3D" id="3.30.230.70">
    <property type="entry name" value="GHMP Kinase, N-terminal domain"/>
    <property type="match status" value="2"/>
</dbReference>
<dbReference type="Gene3D" id="3.30.1370.10">
    <property type="entry name" value="K Homology domain, type 1"/>
    <property type="match status" value="1"/>
</dbReference>
<dbReference type="Gene3D" id="2.40.50.140">
    <property type="entry name" value="Nucleic acid-binding proteins"/>
    <property type="match status" value="1"/>
</dbReference>
<dbReference type="HAMAP" id="MF_01595">
    <property type="entry name" value="PNPase"/>
    <property type="match status" value="1"/>
</dbReference>
<dbReference type="InterPro" id="IPR001247">
    <property type="entry name" value="ExoRNase_PH_dom1"/>
</dbReference>
<dbReference type="InterPro" id="IPR015847">
    <property type="entry name" value="ExoRNase_PH_dom2"/>
</dbReference>
<dbReference type="InterPro" id="IPR036345">
    <property type="entry name" value="ExoRNase_PH_dom2_sf"/>
</dbReference>
<dbReference type="InterPro" id="IPR004087">
    <property type="entry name" value="KH_dom"/>
</dbReference>
<dbReference type="InterPro" id="IPR004088">
    <property type="entry name" value="KH_dom_type_1"/>
</dbReference>
<dbReference type="InterPro" id="IPR036612">
    <property type="entry name" value="KH_dom_type_1_sf"/>
</dbReference>
<dbReference type="InterPro" id="IPR012340">
    <property type="entry name" value="NA-bd_OB-fold"/>
</dbReference>
<dbReference type="InterPro" id="IPR012162">
    <property type="entry name" value="PNPase"/>
</dbReference>
<dbReference type="InterPro" id="IPR027408">
    <property type="entry name" value="PNPase/RNase_PH_dom_sf"/>
</dbReference>
<dbReference type="InterPro" id="IPR015848">
    <property type="entry name" value="PNPase_PH_RNA-bd_bac/org-type"/>
</dbReference>
<dbReference type="InterPro" id="IPR020568">
    <property type="entry name" value="Ribosomal_Su5_D2-typ_SF"/>
</dbReference>
<dbReference type="InterPro" id="IPR003029">
    <property type="entry name" value="S1_domain"/>
</dbReference>
<dbReference type="NCBIfam" id="NF008805">
    <property type="entry name" value="PRK11824.1"/>
    <property type="match status" value="1"/>
</dbReference>
<dbReference type="PANTHER" id="PTHR11252">
    <property type="entry name" value="POLYRIBONUCLEOTIDE NUCLEOTIDYLTRANSFERASE"/>
    <property type="match status" value="1"/>
</dbReference>
<dbReference type="PANTHER" id="PTHR11252:SF0">
    <property type="entry name" value="POLYRIBONUCLEOTIDE NUCLEOTIDYLTRANSFERASE 1, MITOCHONDRIAL"/>
    <property type="match status" value="1"/>
</dbReference>
<dbReference type="Pfam" id="PF00013">
    <property type="entry name" value="KH_1"/>
    <property type="match status" value="1"/>
</dbReference>
<dbReference type="Pfam" id="PF03726">
    <property type="entry name" value="PNPase"/>
    <property type="match status" value="1"/>
</dbReference>
<dbReference type="Pfam" id="PF01138">
    <property type="entry name" value="RNase_PH"/>
    <property type="match status" value="2"/>
</dbReference>
<dbReference type="Pfam" id="PF03725">
    <property type="entry name" value="RNase_PH_C"/>
    <property type="match status" value="2"/>
</dbReference>
<dbReference type="Pfam" id="PF00575">
    <property type="entry name" value="S1"/>
    <property type="match status" value="1"/>
</dbReference>
<dbReference type="PIRSF" id="PIRSF005499">
    <property type="entry name" value="PNPase"/>
    <property type="match status" value="1"/>
</dbReference>
<dbReference type="SMART" id="SM00322">
    <property type="entry name" value="KH"/>
    <property type="match status" value="1"/>
</dbReference>
<dbReference type="SMART" id="SM00316">
    <property type="entry name" value="S1"/>
    <property type="match status" value="1"/>
</dbReference>
<dbReference type="SUPFAM" id="SSF54791">
    <property type="entry name" value="Eukaryotic type KH-domain (KH-domain type I)"/>
    <property type="match status" value="1"/>
</dbReference>
<dbReference type="SUPFAM" id="SSF50249">
    <property type="entry name" value="Nucleic acid-binding proteins"/>
    <property type="match status" value="1"/>
</dbReference>
<dbReference type="SUPFAM" id="SSF55666">
    <property type="entry name" value="Ribonuclease PH domain 2-like"/>
    <property type="match status" value="2"/>
</dbReference>
<dbReference type="SUPFAM" id="SSF54211">
    <property type="entry name" value="Ribosomal protein S5 domain 2-like"/>
    <property type="match status" value="2"/>
</dbReference>
<dbReference type="PROSITE" id="PS50084">
    <property type="entry name" value="KH_TYPE_1"/>
    <property type="match status" value="1"/>
</dbReference>
<dbReference type="PROSITE" id="PS50126">
    <property type="entry name" value="S1"/>
    <property type="match status" value="1"/>
</dbReference>
<gene>
    <name evidence="1" type="primary">pnp</name>
    <name type="ordered locus">CJE1390</name>
</gene>
<keyword id="KW-0963">Cytoplasm</keyword>
<keyword id="KW-0460">Magnesium</keyword>
<keyword id="KW-0479">Metal-binding</keyword>
<keyword id="KW-0548">Nucleotidyltransferase</keyword>
<keyword id="KW-0694">RNA-binding</keyword>
<keyword id="KW-0808">Transferase</keyword>
<reference key="1">
    <citation type="journal article" date="2005" name="PLoS Biol.">
        <title>Major structural differences and novel potential virulence mechanisms from the genomes of multiple Campylobacter species.</title>
        <authorList>
            <person name="Fouts D.E."/>
            <person name="Mongodin E.F."/>
            <person name="Mandrell R.E."/>
            <person name="Miller W.G."/>
            <person name="Rasko D.A."/>
            <person name="Ravel J."/>
            <person name="Brinkac L.M."/>
            <person name="DeBoy R.T."/>
            <person name="Parker C.T."/>
            <person name="Daugherty S.C."/>
            <person name="Dodson R.J."/>
            <person name="Durkin A.S."/>
            <person name="Madupu R."/>
            <person name="Sullivan S.A."/>
            <person name="Shetty J.U."/>
            <person name="Ayodeji M.A."/>
            <person name="Shvartsbeyn A."/>
            <person name="Schatz M.C."/>
            <person name="Badger J.H."/>
            <person name="Fraser C.M."/>
            <person name="Nelson K.E."/>
        </authorList>
    </citation>
    <scope>NUCLEOTIDE SEQUENCE [LARGE SCALE GENOMIC DNA]</scope>
    <source>
        <strain>RM1221</strain>
    </source>
</reference>
<accession>Q5HTK8</accession>
<name>PNP_CAMJR</name>
<proteinExistence type="inferred from homology"/>